<protein>
    <recommendedName>
        <fullName evidence="1">Fluoride-specific ion channel FluC</fullName>
    </recommendedName>
</protein>
<feature type="chain" id="PRO_1000026376" description="Fluoride-specific ion channel FluC">
    <location>
        <begin position="1"/>
        <end position="128"/>
    </location>
</feature>
<feature type="transmembrane region" description="Helical" evidence="1">
    <location>
        <begin position="5"/>
        <end position="25"/>
    </location>
</feature>
<feature type="transmembrane region" description="Helical" evidence="1">
    <location>
        <begin position="35"/>
        <end position="55"/>
    </location>
</feature>
<feature type="transmembrane region" description="Helical" evidence="1">
    <location>
        <begin position="67"/>
        <end position="87"/>
    </location>
</feature>
<feature type="transmembrane region" description="Helical" evidence="1">
    <location>
        <begin position="96"/>
        <end position="116"/>
    </location>
</feature>
<feature type="binding site" evidence="1">
    <location>
        <position position="75"/>
    </location>
    <ligand>
        <name>Na(+)</name>
        <dbReference type="ChEBI" id="CHEBI:29101"/>
        <note>structural</note>
    </ligand>
</feature>
<feature type="binding site" evidence="1">
    <location>
        <position position="78"/>
    </location>
    <ligand>
        <name>Na(+)</name>
        <dbReference type="ChEBI" id="CHEBI:29101"/>
        <note>structural</note>
    </ligand>
</feature>
<proteinExistence type="inferred from homology"/>
<name>FLUC_BURVG</name>
<reference key="1">
    <citation type="submission" date="2007-03" db="EMBL/GenBank/DDBJ databases">
        <title>Complete sequence of chromosome 1 of Burkholderia vietnamiensis G4.</title>
        <authorList>
            <consortium name="US DOE Joint Genome Institute"/>
            <person name="Copeland A."/>
            <person name="Lucas S."/>
            <person name="Lapidus A."/>
            <person name="Barry K."/>
            <person name="Detter J.C."/>
            <person name="Glavina del Rio T."/>
            <person name="Hammon N."/>
            <person name="Israni S."/>
            <person name="Dalin E."/>
            <person name="Tice H."/>
            <person name="Pitluck S."/>
            <person name="Chain P."/>
            <person name="Malfatti S."/>
            <person name="Shin M."/>
            <person name="Vergez L."/>
            <person name="Schmutz J."/>
            <person name="Larimer F."/>
            <person name="Land M."/>
            <person name="Hauser L."/>
            <person name="Kyrpides N."/>
            <person name="Tiedje J."/>
            <person name="Richardson P."/>
        </authorList>
    </citation>
    <scope>NUCLEOTIDE SEQUENCE [LARGE SCALE GENOMIC DNA]</scope>
    <source>
        <strain>G4 / LMG 22486</strain>
    </source>
</reference>
<organism>
    <name type="scientific">Burkholderia vietnamiensis (strain G4 / LMG 22486)</name>
    <name type="common">Burkholderia cepacia (strain R1808)</name>
    <dbReference type="NCBI Taxonomy" id="269482"/>
    <lineage>
        <taxon>Bacteria</taxon>
        <taxon>Pseudomonadati</taxon>
        <taxon>Pseudomonadota</taxon>
        <taxon>Betaproteobacteria</taxon>
        <taxon>Burkholderiales</taxon>
        <taxon>Burkholderiaceae</taxon>
        <taxon>Burkholderia</taxon>
        <taxon>Burkholderia cepacia complex</taxon>
    </lineage>
</organism>
<evidence type="ECO:0000255" key="1">
    <source>
        <dbReference type="HAMAP-Rule" id="MF_00454"/>
    </source>
</evidence>
<gene>
    <name evidence="1" type="primary">fluC</name>
    <name evidence="1" type="synonym">crcB</name>
    <name type="ordered locus">Bcep1808_0863</name>
</gene>
<comment type="function">
    <text evidence="1">Fluoride-specific ion channel. Important for reducing fluoride concentration in the cell, thus reducing its toxicity.</text>
</comment>
<comment type="catalytic activity">
    <reaction evidence="1">
        <text>fluoride(in) = fluoride(out)</text>
        <dbReference type="Rhea" id="RHEA:76159"/>
        <dbReference type="ChEBI" id="CHEBI:17051"/>
    </reaction>
    <physiologicalReaction direction="left-to-right" evidence="1">
        <dbReference type="Rhea" id="RHEA:76160"/>
    </physiologicalReaction>
</comment>
<comment type="activity regulation">
    <text evidence="1">Na(+) is not transported, but it plays an essential structural role and its presence is essential for fluoride channel function.</text>
</comment>
<comment type="subcellular location">
    <subcellularLocation>
        <location evidence="1">Cell inner membrane</location>
        <topology evidence="1">Multi-pass membrane protein</topology>
    </subcellularLocation>
</comment>
<comment type="similarity">
    <text evidence="1">Belongs to the fluoride channel Fluc/FEX (TC 1.A.43) family.</text>
</comment>
<sequence>MFPSIVAIFVGAGLGAVLRWFLGLALNAFVPAMPLGTLAANLLGGYAIGIAAVVFTSRVGLPPEWRLFVITGFLGGLTTFSTYSVEVMTHALQGEFGWAFAVAVLHLTGSFTLTALGMWTASAWFAPA</sequence>
<keyword id="KW-0997">Cell inner membrane</keyword>
<keyword id="KW-1003">Cell membrane</keyword>
<keyword id="KW-0407">Ion channel</keyword>
<keyword id="KW-0406">Ion transport</keyword>
<keyword id="KW-0472">Membrane</keyword>
<keyword id="KW-0479">Metal-binding</keyword>
<keyword id="KW-0915">Sodium</keyword>
<keyword id="KW-0812">Transmembrane</keyword>
<keyword id="KW-1133">Transmembrane helix</keyword>
<keyword id="KW-0813">Transport</keyword>
<dbReference type="EMBL" id="CP000614">
    <property type="protein sequence ID" value="ABO53875.1"/>
    <property type="molecule type" value="Genomic_DNA"/>
</dbReference>
<dbReference type="SMR" id="A4JC72"/>
<dbReference type="KEGG" id="bvi:Bcep1808_0863"/>
<dbReference type="eggNOG" id="COG0239">
    <property type="taxonomic scope" value="Bacteria"/>
</dbReference>
<dbReference type="HOGENOM" id="CLU_114342_3_3_4"/>
<dbReference type="Proteomes" id="UP000002287">
    <property type="component" value="Chromosome 1"/>
</dbReference>
<dbReference type="GO" id="GO:0005886">
    <property type="term" value="C:plasma membrane"/>
    <property type="evidence" value="ECO:0007669"/>
    <property type="project" value="UniProtKB-SubCell"/>
</dbReference>
<dbReference type="GO" id="GO:0062054">
    <property type="term" value="F:fluoride channel activity"/>
    <property type="evidence" value="ECO:0007669"/>
    <property type="project" value="UniProtKB-UniRule"/>
</dbReference>
<dbReference type="GO" id="GO:0046872">
    <property type="term" value="F:metal ion binding"/>
    <property type="evidence" value="ECO:0007669"/>
    <property type="project" value="UniProtKB-KW"/>
</dbReference>
<dbReference type="GO" id="GO:0140114">
    <property type="term" value="P:cellular detoxification of fluoride"/>
    <property type="evidence" value="ECO:0007669"/>
    <property type="project" value="UniProtKB-UniRule"/>
</dbReference>
<dbReference type="HAMAP" id="MF_00454">
    <property type="entry name" value="FluC"/>
    <property type="match status" value="1"/>
</dbReference>
<dbReference type="InterPro" id="IPR003691">
    <property type="entry name" value="FluC"/>
</dbReference>
<dbReference type="NCBIfam" id="TIGR00494">
    <property type="entry name" value="crcB"/>
    <property type="match status" value="1"/>
</dbReference>
<dbReference type="NCBIfam" id="NF010792">
    <property type="entry name" value="PRK14196.1"/>
    <property type="match status" value="1"/>
</dbReference>
<dbReference type="PANTHER" id="PTHR28259">
    <property type="entry name" value="FLUORIDE EXPORT PROTEIN 1-RELATED"/>
    <property type="match status" value="1"/>
</dbReference>
<dbReference type="PANTHER" id="PTHR28259:SF1">
    <property type="entry name" value="FLUORIDE EXPORT PROTEIN 1-RELATED"/>
    <property type="match status" value="1"/>
</dbReference>
<dbReference type="Pfam" id="PF02537">
    <property type="entry name" value="CRCB"/>
    <property type="match status" value="1"/>
</dbReference>
<accession>A4JC72</accession>